<name>RL5_LATSS</name>
<protein>
    <recommendedName>
        <fullName evidence="1">Large ribosomal subunit protein uL5</fullName>
    </recommendedName>
    <alternativeName>
        <fullName evidence="2">50S ribosomal protein L5</fullName>
    </alternativeName>
</protein>
<proteinExistence type="inferred from homology"/>
<evidence type="ECO:0000255" key="1">
    <source>
        <dbReference type="HAMAP-Rule" id="MF_01333"/>
    </source>
</evidence>
<evidence type="ECO:0000305" key="2"/>
<comment type="function">
    <text evidence="1">This is one of the proteins that bind and probably mediate the attachment of the 5S RNA into the large ribosomal subunit, where it forms part of the central protuberance. In the 70S ribosome it contacts protein S13 of the 30S subunit (bridge B1b), connecting the 2 subunits; this bridge is implicated in subunit movement. Contacts the P site tRNA; the 5S rRNA and some of its associated proteins might help stabilize positioning of ribosome-bound tRNAs.</text>
</comment>
<comment type="subunit">
    <text evidence="1">Part of the 50S ribosomal subunit; part of the 5S rRNA/L5/L18/L25 subcomplex. Contacts the 5S rRNA and the P site tRNA. Forms a bridge to the 30S subunit in the 70S ribosome.</text>
</comment>
<comment type="similarity">
    <text evidence="1">Belongs to the universal ribosomal protein uL5 family.</text>
</comment>
<feature type="chain" id="PRO_0000243012" description="Large ribosomal subunit protein uL5">
    <location>
        <begin position="1"/>
        <end position="180"/>
    </location>
</feature>
<dbReference type="EMBL" id="CR936503">
    <property type="protein sequence ID" value="CAI56060.1"/>
    <property type="molecule type" value="Genomic_DNA"/>
</dbReference>
<dbReference type="RefSeq" id="WP_004270214.1">
    <property type="nucleotide sequence ID" value="NC_007576.1"/>
</dbReference>
<dbReference type="SMR" id="Q38US4"/>
<dbReference type="STRING" id="314315.LCA_1752"/>
<dbReference type="GeneID" id="57132669"/>
<dbReference type="KEGG" id="lsa:LCA_1752"/>
<dbReference type="eggNOG" id="COG0094">
    <property type="taxonomic scope" value="Bacteria"/>
</dbReference>
<dbReference type="HOGENOM" id="CLU_061015_2_1_9"/>
<dbReference type="OrthoDB" id="9806626at2"/>
<dbReference type="Proteomes" id="UP000002707">
    <property type="component" value="Chromosome"/>
</dbReference>
<dbReference type="GO" id="GO:1990904">
    <property type="term" value="C:ribonucleoprotein complex"/>
    <property type="evidence" value="ECO:0007669"/>
    <property type="project" value="UniProtKB-KW"/>
</dbReference>
<dbReference type="GO" id="GO:0005840">
    <property type="term" value="C:ribosome"/>
    <property type="evidence" value="ECO:0007669"/>
    <property type="project" value="UniProtKB-KW"/>
</dbReference>
<dbReference type="GO" id="GO:0019843">
    <property type="term" value="F:rRNA binding"/>
    <property type="evidence" value="ECO:0007669"/>
    <property type="project" value="UniProtKB-UniRule"/>
</dbReference>
<dbReference type="GO" id="GO:0003735">
    <property type="term" value="F:structural constituent of ribosome"/>
    <property type="evidence" value="ECO:0007669"/>
    <property type="project" value="InterPro"/>
</dbReference>
<dbReference type="GO" id="GO:0000049">
    <property type="term" value="F:tRNA binding"/>
    <property type="evidence" value="ECO:0007669"/>
    <property type="project" value="UniProtKB-UniRule"/>
</dbReference>
<dbReference type="GO" id="GO:0006412">
    <property type="term" value="P:translation"/>
    <property type="evidence" value="ECO:0007669"/>
    <property type="project" value="UniProtKB-UniRule"/>
</dbReference>
<dbReference type="FunFam" id="3.30.1440.10:FF:000001">
    <property type="entry name" value="50S ribosomal protein L5"/>
    <property type="match status" value="1"/>
</dbReference>
<dbReference type="Gene3D" id="3.30.1440.10">
    <property type="match status" value="1"/>
</dbReference>
<dbReference type="HAMAP" id="MF_01333_B">
    <property type="entry name" value="Ribosomal_uL5_B"/>
    <property type="match status" value="1"/>
</dbReference>
<dbReference type="InterPro" id="IPR002132">
    <property type="entry name" value="Ribosomal_uL5"/>
</dbReference>
<dbReference type="InterPro" id="IPR020930">
    <property type="entry name" value="Ribosomal_uL5_bac-type"/>
</dbReference>
<dbReference type="InterPro" id="IPR031309">
    <property type="entry name" value="Ribosomal_uL5_C"/>
</dbReference>
<dbReference type="InterPro" id="IPR020929">
    <property type="entry name" value="Ribosomal_uL5_CS"/>
</dbReference>
<dbReference type="InterPro" id="IPR022803">
    <property type="entry name" value="Ribosomal_uL5_dom_sf"/>
</dbReference>
<dbReference type="InterPro" id="IPR031310">
    <property type="entry name" value="Ribosomal_uL5_N"/>
</dbReference>
<dbReference type="NCBIfam" id="NF000585">
    <property type="entry name" value="PRK00010.1"/>
    <property type="match status" value="1"/>
</dbReference>
<dbReference type="PANTHER" id="PTHR11994">
    <property type="entry name" value="60S RIBOSOMAL PROTEIN L11-RELATED"/>
    <property type="match status" value="1"/>
</dbReference>
<dbReference type="Pfam" id="PF00281">
    <property type="entry name" value="Ribosomal_L5"/>
    <property type="match status" value="1"/>
</dbReference>
<dbReference type="Pfam" id="PF00673">
    <property type="entry name" value="Ribosomal_L5_C"/>
    <property type="match status" value="1"/>
</dbReference>
<dbReference type="PIRSF" id="PIRSF002161">
    <property type="entry name" value="Ribosomal_L5"/>
    <property type="match status" value="1"/>
</dbReference>
<dbReference type="SUPFAM" id="SSF55282">
    <property type="entry name" value="RL5-like"/>
    <property type="match status" value="1"/>
</dbReference>
<dbReference type="PROSITE" id="PS00358">
    <property type="entry name" value="RIBOSOMAL_L5"/>
    <property type="match status" value="1"/>
</dbReference>
<accession>Q38US4</accession>
<organism>
    <name type="scientific">Latilactobacillus sakei subsp. sakei (strain 23K)</name>
    <name type="common">Lactobacillus sakei subsp. sakei</name>
    <dbReference type="NCBI Taxonomy" id="314315"/>
    <lineage>
        <taxon>Bacteria</taxon>
        <taxon>Bacillati</taxon>
        <taxon>Bacillota</taxon>
        <taxon>Bacilli</taxon>
        <taxon>Lactobacillales</taxon>
        <taxon>Lactobacillaceae</taxon>
        <taxon>Latilactobacillus</taxon>
    </lineage>
</organism>
<reference key="1">
    <citation type="journal article" date="2005" name="Nat. Biotechnol.">
        <title>The complete genome sequence of the meat-borne lactic acid bacterium Lactobacillus sakei 23K.</title>
        <authorList>
            <person name="Chaillou S."/>
            <person name="Champomier-Verges M.-C."/>
            <person name="Cornet M."/>
            <person name="Crutz-Le Coq A.-M."/>
            <person name="Dudez A.-M."/>
            <person name="Martin V."/>
            <person name="Beaufils S."/>
            <person name="Darbon-Rongere E."/>
            <person name="Bossy R."/>
            <person name="Loux V."/>
            <person name="Zagorec M."/>
        </authorList>
    </citation>
    <scope>NUCLEOTIDE SEQUENCE [LARGE SCALE GENOMIC DNA]</scope>
    <source>
        <strain>23K</strain>
    </source>
</reference>
<gene>
    <name evidence="1" type="primary">rplE</name>
    <name type="ordered locus">LCA_1752</name>
</gene>
<sequence>MTNRLKEKYVKEMTPALIEKFNYTSSMQVPKIEKIVLNMGVGDAVSNAKNLDKAVEELGLIAGQKPLITKAKKSIAGFRLREGMPIGAKVTLRGERMYDFLDKLVNVSLPRVRDFHGVSAKSFDGRGNYTLGVREQLIFPEIDYDKVDRVRGLDVVIVTTSNTDEEARELLTQFGMPFAK</sequence>
<keyword id="KW-1185">Reference proteome</keyword>
<keyword id="KW-0687">Ribonucleoprotein</keyword>
<keyword id="KW-0689">Ribosomal protein</keyword>
<keyword id="KW-0694">RNA-binding</keyword>
<keyword id="KW-0699">rRNA-binding</keyword>
<keyword id="KW-0820">tRNA-binding</keyword>